<accession>P27240</accession>
<accession>Q2M7T9</accession>
<feature type="chain" id="PRO_0000097288" description="Lipopolysaccharide core heptose(II) kinase WaaY">
    <location>
        <begin position="1"/>
        <end position="232"/>
    </location>
</feature>
<feature type="sequence conflict" description="In Ref. 1; AAA24521." evidence="5" ref="1">
    <original>DT</original>
    <variation>VS</variation>
    <location>
        <begin position="51"/>
        <end position="52"/>
    </location>
</feature>
<feature type="sequence conflict" description="In Ref. 1; AAA24521." evidence="5" ref="1">
    <original>QQ</original>
    <variation>HE</variation>
    <location>
        <begin position="145"/>
        <end position="146"/>
    </location>
</feature>
<protein>
    <recommendedName>
        <fullName evidence="5">Lipopolysaccharide core heptose(II) kinase WaaY</fullName>
        <ecNumber evidence="1">2.7.1.-</ecNumber>
    </recommendedName>
</protein>
<reference key="1">
    <citation type="journal article" date="1992" name="J. Bacteriol.">
        <title>Comparison of lipopolysaccharide biosynthesis genes rfaK, rfaL, rfaY, and rfaZ of Escherichia coli K-12 and Salmonella typhimurium.</title>
        <authorList>
            <person name="Klena J.D."/>
            <person name="Pradel E."/>
            <person name="Schnaitman C.A."/>
        </authorList>
    </citation>
    <scope>NUCLEOTIDE SEQUENCE [GENOMIC DNA]</scope>
    <source>
        <strain>K12</strain>
    </source>
</reference>
<reference key="2">
    <citation type="journal article" date="1994" name="Nucleic Acids Res.">
        <title>Analysis of the Escherichia coli genome. V. DNA sequence of the region from 76.0 to 81.5 minutes.</title>
        <authorList>
            <person name="Sofia H.J."/>
            <person name="Burland V."/>
            <person name="Daniels D.L."/>
            <person name="Plunkett G. III"/>
            <person name="Blattner F.R."/>
        </authorList>
    </citation>
    <scope>NUCLEOTIDE SEQUENCE [LARGE SCALE GENOMIC DNA]</scope>
    <source>
        <strain>K12 / MG1655 / ATCC 47076</strain>
    </source>
</reference>
<reference key="3">
    <citation type="journal article" date="1997" name="Science">
        <title>The complete genome sequence of Escherichia coli K-12.</title>
        <authorList>
            <person name="Blattner F.R."/>
            <person name="Plunkett G. III"/>
            <person name="Bloch C.A."/>
            <person name="Perna N.T."/>
            <person name="Burland V."/>
            <person name="Riley M."/>
            <person name="Collado-Vides J."/>
            <person name="Glasner J.D."/>
            <person name="Rode C.K."/>
            <person name="Mayhew G.F."/>
            <person name="Gregor J."/>
            <person name="Davis N.W."/>
            <person name="Kirkpatrick H.A."/>
            <person name="Goeden M.A."/>
            <person name="Rose D.J."/>
            <person name="Mau B."/>
            <person name="Shao Y."/>
        </authorList>
    </citation>
    <scope>NUCLEOTIDE SEQUENCE [LARGE SCALE GENOMIC DNA]</scope>
    <source>
        <strain>K12 / MG1655 / ATCC 47076</strain>
    </source>
</reference>
<reference key="4">
    <citation type="journal article" date="2006" name="Mol. Syst. Biol.">
        <title>Highly accurate genome sequences of Escherichia coli K-12 strains MG1655 and W3110.</title>
        <authorList>
            <person name="Hayashi K."/>
            <person name="Morooka N."/>
            <person name="Yamamoto Y."/>
            <person name="Fujita K."/>
            <person name="Isono K."/>
            <person name="Choi S."/>
            <person name="Ohtsubo E."/>
            <person name="Baba T."/>
            <person name="Wanner B.L."/>
            <person name="Mori H."/>
            <person name="Horiuchi T."/>
        </authorList>
    </citation>
    <scope>NUCLEOTIDE SEQUENCE [LARGE SCALE GENOMIC DNA]</scope>
    <source>
        <strain>K12 / W3110 / ATCC 27325 / DSM 5911</strain>
    </source>
</reference>
<reference key="5">
    <citation type="journal article" date="1996" name="Trends Microbiol.">
        <title>Bacterial polysaccharide synthesis and gene nomenclature.</title>
        <authorList>
            <person name="Reeves P.R."/>
            <person name="Hobbs M."/>
            <person name="Valvano M.A."/>
            <person name="Skurnik M."/>
            <person name="Whitfield C."/>
            <person name="Coplin D."/>
            <person name="Kido N."/>
            <person name="Klena J."/>
            <person name="Maskell D."/>
            <person name="Raetz C.R.H."/>
            <person name="Rick P.D."/>
        </authorList>
    </citation>
    <scope>NOMENCLATURE</scope>
</reference>
<reference key="6">
    <citation type="journal article" date="2015" name="J. Biol. Chem.">
        <title>Lipopolysaccharide phosphorylation by the WaaY kinase affects the susceptibility of Escherichia coli to the human antimicrobial peptide LL-37.</title>
        <authorList>
            <person name="Bociek K."/>
            <person name="Ferluga S."/>
            <person name="Mardirossian M."/>
            <person name="Benincasa M."/>
            <person name="Tossi A."/>
            <person name="Gennaro R."/>
            <person name="Scocchi M."/>
        </authorList>
    </citation>
    <scope>DISRUPTION PHENOTYPE</scope>
    <source>
        <strain>HB101</strain>
    </source>
</reference>
<gene>
    <name evidence="4" type="primary">waaY</name>
    <name evidence="3" type="synonym">rfaY</name>
    <name type="ordered locus">b3625</name>
    <name type="ordered locus">JW3600</name>
</gene>
<evidence type="ECO:0000250" key="1">
    <source>
        <dbReference type="UniProtKB" id="Q9ZIS7"/>
    </source>
</evidence>
<evidence type="ECO:0000269" key="2">
    <source>
    </source>
</evidence>
<evidence type="ECO:0000303" key="3">
    <source>
    </source>
</evidence>
<evidence type="ECO:0000303" key="4">
    <source>
    </source>
</evidence>
<evidence type="ECO:0000305" key="5"/>
<name>WAAY_ECOLI</name>
<dbReference type="EC" id="2.7.1.-" evidence="1"/>
<dbReference type="EMBL" id="M95398">
    <property type="protein sequence ID" value="AAA24521.1"/>
    <property type="molecule type" value="Genomic_DNA"/>
</dbReference>
<dbReference type="EMBL" id="U00039">
    <property type="protein sequence ID" value="AAB18602.1"/>
    <property type="molecule type" value="Genomic_DNA"/>
</dbReference>
<dbReference type="EMBL" id="U00096">
    <property type="protein sequence ID" value="AAC76649.1"/>
    <property type="molecule type" value="Genomic_DNA"/>
</dbReference>
<dbReference type="EMBL" id="AP009048">
    <property type="protein sequence ID" value="BAE77667.1"/>
    <property type="molecule type" value="Genomic_DNA"/>
</dbReference>
<dbReference type="PIR" id="S47846">
    <property type="entry name" value="S47846"/>
</dbReference>
<dbReference type="RefSeq" id="NP_418082.1">
    <property type="nucleotide sequence ID" value="NC_000913.3"/>
</dbReference>
<dbReference type="RefSeq" id="WP_000615254.1">
    <property type="nucleotide sequence ID" value="NZ_LN832404.1"/>
</dbReference>
<dbReference type="SMR" id="P27240"/>
<dbReference type="BioGRID" id="4260660">
    <property type="interactions" value="335"/>
</dbReference>
<dbReference type="FunCoup" id="P27240">
    <property type="interactions" value="49"/>
</dbReference>
<dbReference type="IntAct" id="P27240">
    <property type="interactions" value="10"/>
</dbReference>
<dbReference type="STRING" id="511145.b3625"/>
<dbReference type="jPOST" id="P27240"/>
<dbReference type="PaxDb" id="511145-b3625"/>
<dbReference type="EnsemblBacteria" id="AAC76649">
    <property type="protein sequence ID" value="AAC76649"/>
    <property type="gene ID" value="b3625"/>
</dbReference>
<dbReference type="GeneID" id="948145"/>
<dbReference type="KEGG" id="ecj:JW3600"/>
<dbReference type="KEGG" id="eco:b3625"/>
<dbReference type="KEGG" id="ecoc:C3026_19650"/>
<dbReference type="PATRIC" id="fig|1411691.4.peg.3081"/>
<dbReference type="EchoBASE" id="EB1395"/>
<dbReference type="eggNOG" id="COG3642">
    <property type="taxonomic scope" value="Bacteria"/>
</dbReference>
<dbReference type="HOGENOM" id="CLU_103657_0_0_6"/>
<dbReference type="InParanoid" id="P27240"/>
<dbReference type="OMA" id="TWIIAEY"/>
<dbReference type="OrthoDB" id="7065325at2"/>
<dbReference type="PhylomeDB" id="P27240"/>
<dbReference type="BioCyc" id="EcoCyc:EG11425-MONOMER"/>
<dbReference type="BioCyc" id="MetaCyc:EG11425-MONOMER"/>
<dbReference type="UniPathway" id="UPA00958"/>
<dbReference type="PRO" id="PR:P27240"/>
<dbReference type="Proteomes" id="UP000000625">
    <property type="component" value="Chromosome"/>
</dbReference>
<dbReference type="GO" id="GO:0005886">
    <property type="term" value="C:plasma membrane"/>
    <property type="evidence" value="ECO:0007005"/>
    <property type="project" value="EcoCyc"/>
</dbReference>
<dbReference type="GO" id="GO:0005524">
    <property type="term" value="F:ATP binding"/>
    <property type="evidence" value="ECO:0007669"/>
    <property type="project" value="UniProtKB-KW"/>
</dbReference>
<dbReference type="GO" id="GO:0016301">
    <property type="term" value="F:kinase activity"/>
    <property type="evidence" value="ECO:0000315"/>
    <property type="project" value="EcoCyc"/>
</dbReference>
<dbReference type="GO" id="GO:0046835">
    <property type="term" value="P:carbohydrate phosphorylation"/>
    <property type="evidence" value="ECO:0000315"/>
    <property type="project" value="EcoCyc"/>
</dbReference>
<dbReference type="GO" id="GO:0009244">
    <property type="term" value="P:lipopolysaccharide core region biosynthetic process"/>
    <property type="evidence" value="ECO:0000315"/>
    <property type="project" value="EcoCyc"/>
</dbReference>
<dbReference type="InterPro" id="IPR011009">
    <property type="entry name" value="Kinase-like_dom_sf"/>
</dbReference>
<dbReference type="InterPro" id="IPR009330">
    <property type="entry name" value="LipoPS_heptP_kinase"/>
</dbReference>
<dbReference type="NCBIfam" id="NF007684">
    <property type="entry name" value="PRK10359.1"/>
    <property type="match status" value="1"/>
</dbReference>
<dbReference type="Pfam" id="PF06176">
    <property type="entry name" value="WaaY"/>
    <property type="match status" value="1"/>
</dbReference>
<dbReference type="SUPFAM" id="SSF56112">
    <property type="entry name" value="Protein kinase-like (PK-like)"/>
    <property type="match status" value="1"/>
</dbReference>
<comment type="function">
    <text evidence="1">Kinase involved in the biosynthesis of the core oligosaccharide region of lipopolysaccharide (LPS). Catalyzes the phosphorylation of the second heptose unit (HepII) of the inner core.</text>
</comment>
<comment type="catalytic activity">
    <reaction evidence="1">
        <text>alpha-D-Glc-(1-&gt;3)-[L-alpha-D-Hep-(1-&gt;7)]-L-alpha-D-Hep-(1-&gt;3)-4-O-PO3(2-)-L-alpha-D-Hep-(1-&gt;5)-[alpha-Kdo-(2-&gt;4)]-alpha-Kdo-(2-&gt;6)-lipid A + ATP = alpha-D-Glc-(1-&gt;3)-[L-alpha-D-Hep-(1-&gt;7)]-4-O-PO3(2-)-L-alpha-D-Hep-(1-&gt;3)-4-O-PO3(2-)-L-alpha-D-Hep-(1-&gt;5)-[alpha-Kdo-(2-&gt;4)]-alpha-Kdo-(2-&gt;6)-lipid A + ADP + H(+)</text>
        <dbReference type="Rhea" id="RHEA:29931"/>
        <dbReference type="ChEBI" id="CHEBI:15378"/>
        <dbReference type="ChEBI" id="CHEBI:30616"/>
        <dbReference type="ChEBI" id="CHEBI:61999"/>
        <dbReference type="ChEBI" id="CHEBI:62000"/>
        <dbReference type="ChEBI" id="CHEBI:456216"/>
    </reaction>
</comment>
<comment type="pathway">
    <text evidence="1">Bacterial outer membrane biogenesis; LPS core biosynthesis.</text>
</comment>
<comment type="disruption phenotype">
    <text evidence="2">Inactivation of the gene leads to decreased susceptibility to human cathelicidin LL-37, an antimicrobial peptide that acts by damaging bacterial membranes (PubMed:26100635). The decreased susceptibility to LL-37 derives from an altered capacity of the peptide to bind to the bacterial surface and a diminished capacity to lyse membranes (PubMed:26100635). The susceptibility of the mutant to other cationic helical cathelicidins is unaffected (PubMed:26100635).</text>
</comment>
<comment type="similarity">
    <text evidence="5">Belongs to the protein kinase superfamily. RfaY/WaaY family.</text>
</comment>
<sequence>MIQKSKIKDLVVFTDENNSKYLNVLNDFLSYNINIIKVFRSIDDTKVMLIDTDYGKLILKVFSPKVKRNERFFKSLLKGDYYERLFEQTQKVRNEGLNTLNDFYLLAERKTLRFVHTYIMIIEYIDGIELCDMPDIDDALKNKIQQSINALHQHGMVSGDPHRGNFIIKNGEVRIIDLSGKRASAQRKAKDRIDLERHYGIKNEIRDLGYYLLVYRKKMRNFMRRLKGKPAR</sequence>
<organism>
    <name type="scientific">Escherichia coli (strain K12)</name>
    <dbReference type="NCBI Taxonomy" id="83333"/>
    <lineage>
        <taxon>Bacteria</taxon>
        <taxon>Pseudomonadati</taxon>
        <taxon>Pseudomonadota</taxon>
        <taxon>Gammaproteobacteria</taxon>
        <taxon>Enterobacterales</taxon>
        <taxon>Enterobacteriaceae</taxon>
        <taxon>Escherichia</taxon>
    </lineage>
</organism>
<proteinExistence type="inferred from homology"/>
<keyword id="KW-0067">ATP-binding</keyword>
<keyword id="KW-0418">Kinase</keyword>
<keyword id="KW-0448">Lipopolysaccharide biosynthesis</keyword>
<keyword id="KW-0547">Nucleotide-binding</keyword>
<keyword id="KW-1185">Reference proteome</keyword>
<keyword id="KW-0808">Transferase</keyword>